<dbReference type="EC" id="1.10.3.9" evidence="2"/>
<dbReference type="EMBL" id="X04147">
    <property type="protein sequence ID" value="CAA27766.1"/>
    <property type="molecule type" value="Genomic_DNA"/>
</dbReference>
<dbReference type="EMBL" id="FJ423446">
    <property type="protein sequence ID" value="ACJ50151.1"/>
    <property type="molecule type" value="Genomic_DNA"/>
</dbReference>
<dbReference type="EMBL" id="BK000554">
    <property type="protein sequence ID" value="DAA00964.1"/>
    <property type="molecule type" value="Genomic_DNA"/>
</dbReference>
<dbReference type="PIR" id="A25466">
    <property type="entry name" value="A25466"/>
</dbReference>
<dbReference type="RefSeq" id="NP_958420.1">
    <property type="nucleotide sequence ID" value="NC_005353.1"/>
</dbReference>
<dbReference type="PDB" id="6KAC">
    <property type="method" value="EM"/>
    <property type="resolution" value="2.70 A"/>
    <property type="chains" value="D/d=1-352"/>
</dbReference>
<dbReference type="PDB" id="6KAD">
    <property type="method" value="EM"/>
    <property type="resolution" value="3.40 A"/>
    <property type="chains" value="D/d=1-352"/>
</dbReference>
<dbReference type="PDB" id="6KAF">
    <property type="method" value="EM"/>
    <property type="resolution" value="3.73 A"/>
    <property type="chains" value="D/d=1-352"/>
</dbReference>
<dbReference type="PDB" id="8KDE">
    <property type="method" value="EM"/>
    <property type="resolution" value="2.60 A"/>
    <property type="chains" value="D=1-352"/>
</dbReference>
<dbReference type="PDB" id="8R2I">
    <property type="method" value="EM"/>
    <property type="resolution" value="2.90 A"/>
    <property type="chains" value="D=3-352"/>
</dbReference>
<dbReference type="PDB" id="8ZEE">
    <property type="method" value="EM"/>
    <property type="resolution" value="2.90 A"/>
    <property type="chains" value="D=1-352"/>
</dbReference>
<dbReference type="PDBsum" id="6KAC"/>
<dbReference type="PDBsum" id="6KAD"/>
<dbReference type="PDBsum" id="6KAF"/>
<dbReference type="PDBsum" id="8KDE"/>
<dbReference type="PDBsum" id="8R2I"/>
<dbReference type="PDBsum" id="8ZEE"/>
<dbReference type="EMDB" id="EMD-18848"/>
<dbReference type="EMDB" id="EMD-37133"/>
<dbReference type="EMDB" id="EMD-60026"/>
<dbReference type="EMDB" id="EMD-9955"/>
<dbReference type="EMDB" id="EMD-9956"/>
<dbReference type="EMDB" id="EMD-9957"/>
<dbReference type="SMR" id="P06007"/>
<dbReference type="FunCoup" id="P06007">
    <property type="interactions" value="230"/>
</dbReference>
<dbReference type="STRING" id="3055.P06007"/>
<dbReference type="PaxDb" id="3055-DAA00964"/>
<dbReference type="GeneID" id="2716961"/>
<dbReference type="KEGG" id="cre:ChreCp064"/>
<dbReference type="eggNOG" id="ENOG502QWJF">
    <property type="taxonomic scope" value="Eukaryota"/>
</dbReference>
<dbReference type="HOGENOM" id="CLU_077965_0_0_1"/>
<dbReference type="InParanoid" id="P06007"/>
<dbReference type="BioCyc" id="CHLAMY:CHRECP064-MONOMER"/>
<dbReference type="BioCyc" id="MetaCyc:CHRECP064-MONOMER"/>
<dbReference type="Proteomes" id="UP000006906">
    <property type="component" value="Chloroplast"/>
</dbReference>
<dbReference type="GO" id="GO:0009535">
    <property type="term" value="C:chloroplast thylakoid membrane"/>
    <property type="evidence" value="ECO:0007669"/>
    <property type="project" value="UniProtKB-SubCell"/>
</dbReference>
<dbReference type="GO" id="GO:0009523">
    <property type="term" value="C:photosystem II"/>
    <property type="evidence" value="ECO:0000318"/>
    <property type="project" value="GO_Central"/>
</dbReference>
<dbReference type="GO" id="GO:0016168">
    <property type="term" value="F:chlorophyll binding"/>
    <property type="evidence" value="ECO:0007669"/>
    <property type="project" value="UniProtKB-UniRule"/>
</dbReference>
<dbReference type="GO" id="GO:0045156">
    <property type="term" value="F:electron transporter, transferring electrons within the cyclic electron transport pathway of photosynthesis activity"/>
    <property type="evidence" value="ECO:0007669"/>
    <property type="project" value="InterPro"/>
</dbReference>
<dbReference type="GO" id="GO:0005506">
    <property type="term" value="F:iron ion binding"/>
    <property type="evidence" value="ECO:0007669"/>
    <property type="project" value="UniProtKB-UniRule"/>
</dbReference>
<dbReference type="GO" id="GO:0010242">
    <property type="term" value="F:oxygen evolving activity"/>
    <property type="evidence" value="ECO:0007669"/>
    <property type="project" value="UniProtKB-EC"/>
</dbReference>
<dbReference type="GO" id="GO:0009772">
    <property type="term" value="P:photosynthetic electron transport in photosystem II"/>
    <property type="evidence" value="ECO:0007669"/>
    <property type="project" value="InterPro"/>
</dbReference>
<dbReference type="CDD" id="cd09288">
    <property type="entry name" value="Photosystem-II_D2"/>
    <property type="match status" value="1"/>
</dbReference>
<dbReference type="FunFam" id="1.20.85.10:FF:000001">
    <property type="entry name" value="photosystem II D2 protein-like"/>
    <property type="match status" value="1"/>
</dbReference>
<dbReference type="Gene3D" id="1.20.85.10">
    <property type="entry name" value="Photosystem II protein D1-like"/>
    <property type="match status" value="1"/>
</dbReference>
<dbReference type="HAMAP" id="MF_01383">
    <property type="entry name" value="PSII_PsbD_D2"/>
    <property type="match status" value="1"/>
</dbReference>
<dbReference type="InterPro" id="IPR055266">
    <property type="entry name" value="D1/D2"/>
</dbReference>
<dbReference type="InterPro" id="IPR036854">
    <property type="entry name" value="Photo_II_D1/D2_sf"/>
</dbReference>
<dbReference type="InterPro" id="IPR000484">
    <property type="entry name" value="Photo_RC_L/M"/>
</dbReference>
<dbReference type="InterPro" id="IPR055265">
    <property type="entry name" value="Photo_RC_L/M_CS"/>
</dbReference>
<dbReference type="InterPro" id="IPR005868">
    <property type="entry name" value="PSII_PsbD/D2"/>
</dbReference>
<dbReference type="NCBIfam" id="TIGR01152">
    <property type="entry name" value="psbD"/>
    <property type="match status" value="1"/>
</dbReference>
<dbReference type="PANTHER" id="PTHR33149:SF12">
    <property type="entry name" value="PHOTOSYSTEM II D2 PROTEIN"/>
    <property type="match status" value="1"/>
</dbReference>
<dbReference type="PANTHER" id="PTHR33149">
    <property type="entry name" value="PHOTOSYSTEM II PROTEIN D1"/>
    <property type="match status" value="1"/>
</dbReference>
<dbReference type="Pfam" id="PF00124">
    <property type="entry name" value="Photo_RC"/>
    <property type="match status" value="1"/>
</dbReference>
<dbReference type="PRINTS" id="PR00256">
    <property type="entry name" value="REACTNCENTRE"/>
</dbReference>
<dbReference type="SUPFAM" id="SSF81483">
    <property type="entry name" value="Bacterial photosystem II reaction centre, L and M subunits"/>
    <property type="match status" value="1"/>
</dbReference>
<dbReference type="PROSITE" id="PS00244">
    <property type="entry name" value="REACTION_CENTER"/>
    <property type="match status" value="1"/>
</dbReference>
<gene>
    <name evidence="2" type="primary">psbD</name>
</gene>
<name>PSBD_CHLRE</name>
<accession>P06007</accession>
<accession>B7U1K4</accession>
<feature type="initiator methionine" description="Removed" evidence="1">
    <location>
        <position position="1"/>
    </location>
</feature>
<feature type="chain" id="PRO_0000090500" description="Photosystem II D2 protein">
    <location>
        <begin position="2"/>
        <end position="352"/>
    </location>
</feature>
<feature type="transmembrane region" description="Helical" evidence="2">
    <location>
        <begin position="40"/>
        <end position="60"/>
    </location>
</feature>
<feature type="transmembrane region" description="Helical" evidence="2">
    <location>
        <begin position="124"/>
        <end position="140"/>
    </location>
</feature>
<feature type="transmembrane region" description="Helical" evidence="2">
    <location>
        <begin position="152"/>
        <end position="165"/>
    </location>
</feature>
<feature type="transmembrane region" description="Helical" evidence="2">
    <location>
        <begin position="207"/>
        <end position="227"/>
    </location>
</feature>
<feature type="transmembrane region" description="Helical" evidence="2">
    <location>
        <begin position="278"/>
        <end position="294"/>
    </location>
</feature>
<feature type="binding site" description="axial binding residue" evidence="2">
    <location>
        <position position="117"/>
    </location>
    <ligand>
        <name>chlorophyll a</name>
        <dbReference type="ChEBI" id="CHEBI:58416"/>
        <label>ChlzD2</label>
    </ligand>
    <ligandPart>
        <name>Mg</name>
        <dbReference type="ChEBI" id="CHEBI:25107"/>
    </ligandPart>
</feature>
<feature type="binding site" evidence="2">
    <location>
        <position position="129"/>
    </location>
    <ligand>
        <name>pheophytin a</name>
        <dbReference type="ChEBI" id="CHEBI:136840"/>
        <label>D2</label>
    </ligand>
</feature>
<feature type="binding site" evidence="2">
    <location>
        <position position="142"/>
    </location>
    <ligand>
        <name>pheophytin a</name>
        <dbReference type="ChEBI" id="CHEBI:136840"/>
        <label>D2</label>
    </ligand>
</feature>
<feature type="binding site" description="axial binding residue" evidence="2">
    <location>
        <position position="197"/>
    </location>
    <ligand>
        <name>chlorophyll a</name>
        <dbReference type="ChEBI" id="CHEBI:58416"/>
        <label>PD2</label>
    </ligand>
    <ligandPart>
        <name>Mg</name>
        <dbReference type="ChEBI" id="CHEBI:25107"/>
    </ligandPart>
</feature>
<feature type="binding site" evidence="2">
    <location>
        <position position="214"/>
    </location>
    <ligand>
        <name>a plastoquinone</name>
        <dbReference type="ChEBI" id="CHEBI:17757"/>
        <label>Q(A)</label>
    </ligand>
</feature>
<feature type="binding site" evidence="2">
    <location>
        <position position="214"/>
    </location>
    <ligand>
        <name>Fe cation</name>
        <dbReference type="ChEBI" id="CHEBI:24875"/>
        <note>ligand shared with heterodimeric partner</note>
    </ligand>
</feature>
<feature type="binding site" evidence="2">
    <location>
        <position position="261"/>
    </location>
    <ligand>
        <name>a plastoquinone</name>
        <dbReference type="ChEBI" id="CHEBI:17757"/>
        <label>Q(A)</label>
    </ligand>
</feature>
<feature type="binding site" evidence="2">
    <location>
        <position position="268"/>
    </location>
    <ligand>
        <name>Fe cation</name>
        <dbReference type="ChEBI" id="CHEBI:24875"/>
        <note>ligand shared with heterodimeric partner</note>
    </ligand>
</feature>
<feature type="modified residue" description="N-acetylthreonine" evidence="1">
    <location>
        <position position="2"/>
    </location>
</feature>
<feature type="modified residue" description="Phosphothreonine" evidence="1">
    <location>
        <position position="2"/>
    </location>
</feature>
<feature type="turn" evidence="4">
    <location>
        <begin position="6"/>
        <end position="8"/>
    </location>
</feature>
<feature type="helix" evidence="5">
    <location>
        <begin position="14"/>
        <end position="22"/>
    </location>
</feature>
<feature type="strand" evidence="5">
    <location>
        <begin position="26"/>
        <end position="28"/>
    </location>
</feature>
<feature type="helix" evidence="5">
    <location>
        <begin position="31"/>
        <end position="53"/>
    </location>
</feature>
<feature type="helix" evidence="5">
    <location>
        <begin position="58"/>
        <end position="61"/>
    </location>
</feature>
<feature type="helix" evidence="5">
    <location>
        <begin position="67"/>
        <end position="69"/>
    </location>
</feature>
<feature type="turn" evidence="5">
    <location>
        <begin position="73"/>
        <end position="75"/>
    </location>
</feature>
<feature type="helix" evidence="4">
    <location>
        <begin position="83"/>
        <end position="85"/>
    </location>
</feature>
<feature type="turn" evidence="5">
    <location>
        <begin position="95"/>
        <end position="99"/>
    </location>
</feature>
<feature type="helix" evidence="5">
    <location>
        <begin position="101"/>
        <end position="107"/>
    </location>
</feature>
<feature type="helix" evidence="5">
    <location>
        <begin position="109"/>
        <end position="135"/>
    </location>
</feature>
<feature type="helix" evidence="5">
    <location>
        <begin position="141"/>
        <end position="163"/>
    </location>
</feature>
<feature type="strand" evidence="5">
    <location>
        <begin position="164"/>
        <end position="166"/>
    </location>
</feature>
<feature type="helix" evidence="5">
    <location>
        <begin position="167"/>
        <end position="169"/>
    </location>
</feature>
<feature type="helix" evidence="5">
    <location>
        <begin position="175"/>
        <end position="189"/>
    </location>
</feature>
<feature type="helix" evidence="5">
    <location>
        <begin position="191"/>
        <end position="193"/>
    </location>
</feature>
<feature type="helix" evidence="5">
    <location>
        <begin position="195"/>
        <end position="219"/>
    </location>
</feature>
<feature type="strand" evidence="5">
    <location>
        <begin position="221"/>
        <end position="223"/>
    </location>
</feature>
<feature type="strand" evidence="5">
    <location>
        <begin position="227"/>
        <end position="229"/>
    </location>
</feature>
<feature type="strand" evidence="5">
    <location>
        <begin position="231"/>
        <end position="234"/>
    </location>
</feature>
<feature type="helix" evidence="5">
    <location>
        <begin position="246"/>
        <end position="256"/>
    </location>
</feature>
<feature type="helix" evidence="5">
    <location>
        <begin position="264"/>
        <end position="290"/>
    </location>
</feature>
<feature type="helix" evidence="5">
    <location>
        <begin position="299"/>
        <end position="307"/>
    </location>
</feature>
<feature type="helix" evidence="5">
    <location>
        <begin position="314"/>
        <end position="333"/>
    </location>
</feature>
<feature type="helix" evidence="5">
    <location>
        <begin position="335"/>
        <end position="337"/>
    </location>
</feature>
<feature type="turn" evidence="5">
    <location>
        <begin position="343"/>
        <end position="345"/>
    </location>
</feature>
<feature type="helix" evidence="5">
    <location>
        <begin position="349"/>
        <end position="351"/>
    </location>
</feature>
<organism>
    <name type="scientific">Chlamydomonas reinhardtii</name>
    <name type="common">Chlamydomonas smithii</name>
    <dbReference type="NCBI Taxonomy" id="3055"/>
    <lineage>
        <taxon>Eukaryota</taxon>
        <taxon>Viridiplantae</taxon>
        <taxon>Chlorophyta</taxon>
        <taxon>core chlorophytes</taxon>
        <taxon>Chlorophyceae</taxon>
        <taxon>CS clade</taxon>
        <taxon>Chlamydomonadales</taxon>
        <taxon>Chlamydomonadaceae</taxon>
        <taxon>Chlamydomonas</taxon>
    </lineage>
</organism>
<protein>
    <recommendedName>
        <fullName evidence="2">Photosystem II D2 protein</fullName>
        <shortName evidence="2">PSII D2 protein</shortName>
        <ecNumber evidence="2">1.10.3.9</ecNumber>
    </recommendedName>
    <alternativeName>
        <fullName evidence="2">Photosystem Q(A) protein</fullName>
    </alternativeName>
</protein>
<keyword id="KW-0002">3D-structure</keyword>
<keyword id="KW-0007">Acetylation</keyword>
<keyword id="KW-0148">Chlorophyll</keyword>
<keyword id="KW-0150">Chloroplast</keyword>
<keyword id="KW-0157">Chromophore</keyword>
<keyword id="KW-0249">Electron transport</keyword>
<keyword id="KW-0408">Iron</keyword>
<keyword id="KW-0460">Magnesium</keyword>
<keyword id="KW-0472">Membrane</keyword>
<keyword id="KW-0479">Metal-binding</keyword>
<keyword id="KW-0560">Oxidoreductase</keyword>
<keyword id="KW-0597">Phosphoprotein</keyword>
<keyword id="KW-0602">Photosynthesis</keyword>
<keyword id="KW-0604">Photosystem II</keyword>
<keyword id="KW-0934">Plastid</keyword>
<keyword id="KW-1185">Reference proteome</keyword>
<keyword id="KW-0793">Thylakoid</keyword>
<keyword id="KW-0812">Transmembrane</keyword>
<keyword id="KW-1133">Transmembrane helix</keyword>
<keyword id="KW-0813">Transport</keyword>
<proteinExistence type="evidence at protein level"/>
<geneLocation type="chloroplast"/>
<reference key="1">
    <citation type="journal article" date="1986" name="EMBO J.">
        <title>Lack of the D2 protein in a Chlamydomonas reinhardtii psbD mutant affects photosystem II stability and D1 expression.</title>
        <authorList>
            <person name="Erickson J.M."/>
            <person name="Rahire M."/>
            <person name="Malnoe P."/>
            <person name="Girard-Bascou J."/>
            <person name="Pierre Y."/>
            <person name="Bennoun P."/>
            <person name="Rochaix J.-D."/>
        </authorList>
    </citation>
    <scope>NUCLEOTIDE SEQUENCE [GENOMIC DNA]</scope>
</reference>
<reference key="2">
    <citation type="journal article" date="2009" name="BMC Evol. Biol.">
        <title>Nucleotide diversity of the Chlamydomonas reinhardtii plastid genome: addressing the mutational-hazard hypothesis.</title>
        <authorList>
            <person name="Smith D.R."/>
            <person name="Lee R.W."/>
        </authorList>
    </citation>
    <scope>NUCLEOTIDE SEQUENCE [LARGE SCALE GENOMIC DNA]</scope>
    <source>
        <strain>CC-503</strain>
    </source>
</reference>
<reference key="3">
    <citation type="journal article" date="2002" name="Plant Cell">
        <title>The Chlamydomonas reinhardtii plastid chromosome: islands of genes in a sea of repeats.</title>
        <authorList>
            <person name="Maul J.E."/>
            <person name="Lilly J.W."/>
            <person name="Cui L."/>
            <person name="dePamphilis C.W."/>
            <person name="Miller W."/>
            <person name="Harris E.H."/>
            <person name="Stern D.B."/>
        </authorList>
    </citation>
    <scope>IDENTIFICATION</scope>
    <scope>COMPLETE PLASTID GENOME</scope>
</reference>
<reference key="4">
    <citation type="journal article" date="1991" name="J. Biol. Chem.">
        <title>Photosystem II particles from Chlamydomonas reinhardtii. Purification, molecular weight, small subunit composition, and protein phosphorylation.</title>
        <authorList>
            <person name="de Vitry C."/>
            <person name="Diner B.A."/>
            <person name="Popo J.-L."/>
        </authorList>
    </citation>
    <scope>SUBUNIT</scope>
    <scope>SUBCELLULAR LOCATION</scope>
    <scope>PHOSPHORYLATION</scope>
</reference>
<sequence length="352" mass="39447">MTIAIGTYQEKRTWFDDADDWLRQDRFVFVGWSGLLLFPCAYFALGGWLTGTTFVTSWYTHGLATSYLEGCNFLTAAVSTPANSMAHSLLFVWGPEAQGDFTRWCQLGGLWAFVALHGAFGLIGFMLRQFEIARSVNLRPYNAIAFSAPIAVFVSVFLIYPLGQSGWFFAPSFGVAAIFRFILFFQGFHNWTLNPFHMMGVAGVLGAALLCAIHGATVENTLFEDGDGANTFRAFNPTQAEETYSMVTANRFWSQIFGVAFSNKRWLHFFMLLVPVTGLWMSAIGVVGLALNLRAYDFVSQEIRAAEDPEFETFYTKNILLNEGIRAWMAAQDQPHERLVFPEEVLPRGNAL</sequence>
<evidence type="ECO:0000250" key="1">
    <source>
        <dbReference type="UniProtKB" id="P56761"/>
    </source>
</evidence>
<evidence type="ECO:0000255" key="2">
    <source>
        <dbReference type="HAMAP-Rule" id="MF_01383"/>
    </source>
</evidence>
<evidence type="ECO:0000269" key="3">
    <source>
    </source>
</evidence>
<evidence type="ECO:0007829" key="4">
    <source>
        <dbReference type="PDB" id="6KAC"/>
    </source>
</evidence>
<evidence type="ECO:0007829" key="5">
    <source>
        <dbReference type="PDB" id="8KDE"/>
    </source>
</evidence>
<comment type="function">
    <text evidence="2">Photosystem II (PSII) is a light-driven water:plastoquinone oxidoreductase that uses light energy to abstract electrons from H(2)O, generating O(2) and a proton gradient subsequently used for ATP formation. It consists of a core antenna complex that captures photons, and an electron transfer chain that converts photonic excitation into a charge separation. The D1/D2 (PsbA/PsbD) reaction center heterodimer binds P680, the primary electron donor of PSII as well as several subsequent electron acceptors. D2 is needed for assembly of a stable PSII complex.</text>
</comment>
<comment type="catalytic activity">
    <reaction evidence="2">
        <text>2 a plastoquinone + 4 hnu + 2 H2O = 2 a plastoquinol + O2</text>
        <dbReference type="Rhea" id="RHEA:36359"/>
        <dbReference type="Rhea" id="RHEA-COMP:9561"/>
        <dbReference type="Rhea" id="RHEA-COMP:9562"/>
        <dbReference type="ChEBI" id="CHEBI:15377"/>
        <dbReference type="ChEBI" id="CHEBI:15379"/>
        <dbReference type="ChEBI" id="CHEBI:17757"/>
        <dbReference type="ChEBI" id="CHEBI:30212"/>
        <dbReference type="ChEBI" id="CHEBI:62192"/>
        <dbReference type="EC" id="1.10.3.9"/>
    </reaction>
</comment>
<comment type="cofactor">
    <text evidence="2">The D1/D2 heterodimer binds P680, chlorophylls that are the primary electron donor of PSII, and subsequent electron acceptors. It shares a non-heme iron and each subunit binds pheophytin, quinone, additional chlorophylls, carotenoids and lipids. There is also a Cl(-1) ion associated with D1 and D2, which is required for oxygen evolution. The PSII complex binds additional chlorophylls, carotenoids and specific lipids.</text>
</comment>
<comment type="subunit">
    <text evidence="2 3">PSII is composed of 1 copy each of membrane proteins PsbA, PsbB, PsbC, PsbD, PsbE, PsbF, PsbH, PsbI, PsbJ, PsbK, PsbL, PsbM, PsbT, PsbX, PsbY, PsbZ, Psb30/Ycf12, at least 3 peripheral proteins of the oxygen-evolving complex and a large number of cofactors. It forms dimeric complexes.</text>
</comment>
<comment type="subcellular location">
    <subcellularLocation>
        <location evidence="2 3">Plastid</location>
        <location evidence="2 3">Chloroplast thylakoid membrane</location>
        <topology evidence="2">Multi-pass membrane protein</topology>
    </subcellularLocation>
</comment>
<comment type="PTM">
    <text evidence="3">Phosphorylated in vitro (PubMed:1885590).</text>
</comment>
<comment type="miscellaneous">
    <text evidence="2">2 of the reaction center chlorophylls (ChlD1 and ChlD2) are entirely coordinated by water.</text>
</comment>
<comment type="similarity">
    <text evidence="2">Belongs to the reaction center PufL/M/PsbA/D family.</text>
</comment>